<comment type="function">
    <text>Positive activator of the genes for pyochelin and ferripyochelin receptors.</text>
</comment>
<comment type="induction">
    <text>Expression is iron regulated.</text>
</comment>
<gene>
    <name type="primary">pchR</name>
    <name type="ordered locus">PA4227</name>
</gene>
<sequence>MTITIIAPPQADAAAPAPGNRPGVAHIDPNMKLVTGTFCSASEDWFEEPLERGLRLILVQSGQLRCRIPGQPEHLIEGPSLCTIANDGDFTSAQIYGTDKPLRYTIVQLGVEALDSRLGWLPEQLIRRPGGDPRIMSCPAPRAMQALASQIATCQMLGPTRDLYLGGKALELAALSAQFLSGEGRPVEEPRITCSEVERIHAARDLLVGALQEPPSLDTLASRVGMNPRKLTAGFRKVFGASVFGYLQEYRLREAHRMLCDEEANVSTVAYRVGYSPAHFSIAFRKRYGISPSEIR</sequence>
<organism>
    <name type="scientific">Pseudomonas aeruginosa (strain ATCC 15692 / DSM 22644 / CIP 104116 / JCM 14847 / LMG 12228 / 1C / PRS 101 / PAO1)</name>
    <dbReference type="NCBI Taxonomy" id="208964"/>
    <lineage>
        <taxon>Bacteria</taxon>
        <taxon>Pseudomonadati</taxon>
        <taxon>Pseudomonadota</taxon>
        <taxon>Gammaproteobacteria</taxon>
        <taxon>Pseudomonadales</taxon>
        <taxon>Pseudomonadaceae</taxon>
        <taxon>Pseudomonas</taxon>
    </lineage>
</organism>
<reference key="1">
    <citation type="journal article" date="1993" name="J. Bacteriol.">
        <title>Cloning and sequence analysis of a gene (pchR) encoding an AraC family activator of pyochelin and ferripyochelin receptor synthesis in Pseudomonas aeruginosa.</title>
        <authorList>
            <person name="Heinrichs D.E."/>
            <person name="Poole K."/>
        </authorList>
    </citation>
    <scope>NUCLEOTIDE SEQUENCE [GENOMIC DNA]</scope>
    <source>
        <strain>ATCC 15692 / DSM 22644 / CIP 104116 / JCM 14847 / LMG 12228 / 1C / PRS 101 / PAO1</strain>
    </source>
</reference>
<reference key="2">
    <citation type="journal article" date="2000" name="Nature">
        <title>Complete genome sequence of Pseudomonas aeruginosa PAO1, an opportunistic pathogen.</title>
        <authorList>
            <person name="Stover C.K."/>
            <person name="Pham X.-Q.T."/>
            <person name="Erwin A.L."/>
            <person name="Mizoguchi S.D."/>
            <person name="Warrener P."/>
            <person name="Hickey M.J."/>
            <person name="Brinkman F.S.L."/>
            <person name="Hufnagle W.O."/>
            <person name="Kowalik D.J."/>
            <person name="Lagrou M."/>
            <person name="Garber R.L."/>
            <person name="Goltry L."/>
            <person name="Tolentino E."/>
            <person name="Westbrock-Wadman S."/>
            <person name="Yuan Y."/>
            <person name="Brody L.L."/>
            <person name="Coulter S.N."/>
            <person name="Folger K.R."/>
            <person name="Kas A."/>
            <person name="Larbig K."/>
            <person name="Lim R.M."/>
            <person name="Smith K.A."/>
            <person name="Spencer D.H."/>
            <person name="Wong G.K.-S."/>
            <person name="Wu Z."/>
            <person name="Paulsen I.T."/>
            <person name="Reizer J."/>
            <person name="Saier M.H. Jr."/>
            <person name="Hancock R.E.W."/>
            <person name="Lory S."/>
            <person name="Olson M.V."/>
        </authorList>
    </citation>
    <scope>NUCLEOTIDE SEQUENCE [LARGE SCALE GENOMIC DNA]</scope>
    <source>
        <strain>ATCC 15692 / DSM 22644 / CIP 104116 / JCM 14847 / LMG 12228 / 1C / PRS 101 / PAO1</strain>
    </source>
</reference>
<keyword id="KW-0010">Activator</keyword>
<keyword id="KW-0238">DNA-binding</keyword>
<keyword id="KW-1185">Reference proteome</keyword>
<keyword id="KW-0804">Transcription</keyword>
<keyword id="KW-0805">Transcription regulation</keyword>
<protein>
    <recommendedName>
        <fullName>Regulatory protein PchR</fullName>
    </recommendedName>
</protein>
<feature type="chain" id="PRO_0000194544" description="Regulatory protein PchR">
    <location>
        <begin position="1"/>
        <end position="296"/>
    </location>
</feature>
<feature type="domain" description="HTH araC/xylS-type" evidence="1">
    <location>
        <begin position="201"/>
        <end position="296"/>
    </location>
</feature>
<feature type="DNA-binding region" description="H-T-H motif" evidence="1">
    <location>
        <begin position="218"/>
        <end position="239"/>
    </location>
</feature>
<feature type="DNA-binding region" description="H-T-H motif" evidence="1">
    <location>
        <begin position="266"/>
        <end position="288"/>
    </location>
</feature>
<name>PCHR_PSEAE</name>
<dbReference type="EMBL" id="L11657">
    <property type="protein sequence ID" value="AAA25926.1"/>
    <property type="molecule type" value="Genomic_DNA"/>
</dbReference>
<dbReference type="EMBL" id="AE004091">
    <property type="protein sequence ID" value="AAG07615.1"/>
    <property type="molecule type" value="Genomic_DNA"/>
</dbReference>
<dbReference type="PIR" id="A48496">
    <property type="entry name" value="A48496"/>
</dbReference>
<dbReference type="RefSeq" id="NP_252917.1">
    <property type="nucleotide sequence ID" value="NC_002516.2"/>
</dbReference>
<dbReference type="RefSeq" id="WP_003106955.1">
    <property type="nucleotide sequence ID" value="NZ_QZGE01000028.1"/>
</dbReference>
<dbReference type="SMR" id="P40883"/>
<dbReference type="STRING" id="208964.PA4227"/>
<dbReference type="PaxDb" id="208964-PA4227"/>
<dbReference type="DNASU" id="880049"/>
<dbReference type="GeneID" id="880049"/>
<dbReference type="KEGG" id="pae:PA4227"/>
<dbReference type="PATRIC" id="fig|208964.12.peg.4428"/>
<dbReference type="PseudoCAP" id="PA4227"/>
<dbReference type="HOGENOM" id="CLU_052345_4_2_6"/>
<dbReference type="InParanoid" id="P40883"/>
<dbReference type="OrthoDB" id="6670788at2"/>
<dbReference type="PhylomeDB" id="P40883"/>
<dbReference type="BioCyc" id="PAER208964:G1FZ6-4300-MONOMER"/>
<dbReference type="Proteomes" id="UP000002438">
    <property type="component" value="Chromosome"/>
</dbReference>
<dbReference type="CollecTF" id="EXPREG_00000aa0"/>
<dbReference type="GO" id="GO:0032993">
    <property type="term" value="C:protein-DNA complex"/>
    <property type="evidence" value="ECO:0000315"/>
    <property type="project" value="CollecTF"/>
</dbReference>
<dbReference type="GO" id="GO:0001216">
    <property type="term" value="F:DNA-binding transcription activator activity"/>
    <property type="evidence" value="ECO:0000315"/>
    <property type="project" value="CollecTF"/>
</dbReference>
<dbReference type="GO" id="GO:0001217">
    <property type="term" value="F:DNA-binding transcription repressor activity"/>
    <property type="evidence" value="ECO:0000315"/>
    <property type="project" value="CollecTF"/>
</dbReference>
<dbReference type="GO" id="GO:0000976">
    <property type="term" value="F:transcription cis-regulatory region binding"/>
    <property type="evidence" value="ECO:0000315"/>
    <property type="project" value="CollecTF"/>
</dbReference>
<dbReference type="Gene3D" id="1.10.10.60">
    <property type="entry name" value="Homeodomain-like"/>
    <property type="match status" value="2"/>
</dbReference>
<dbReference type="InterPro" id="IPR009057">
    <property type="entry name" value="Homeodomain-like_sf"/>
</dbReference>
<dbReference type="InterPro" id="IPR018060">
    <property type="entry name" value="HTH_AraC"/>
</dbReference>
<dbReference type="InterPro" id="IPR018062">
    <property type="entry name" value="HTH_AraC-typ_CS"/>
</dbReference>
<dbReference type="InterPro" id="IPR053142">
    <property type="entry name" value="PchR_regulatory_protein"/>
</dbReference>
<dbReference type="PANTHER" id="PTHR47893">
    <property type="entry name" value="REGULATORY PROTEIN PCHR"/>
    <property type="match status" value="1"/>
</dbReference>
<dbReference type="PANTHER" id="PTHR47893:SF1">
    <property type="entry name" value="REGULATORY PROTEIN PCHR"/>
    <property type="match status" value="1"/>
</dbReference>
<dbReference type="Pfam" id="PF12833">
    <property type="entry name" value="HTH_18"/>
    <property type="match status" value="1"/>
</dbReference>
<dbReference type="SMART" id="SM00342">
    <property type="entry name" value="HTH_ARAC"/>
    <property type="match status" value="1"/>
</dbReference>
<dbReference type="SUPFAM" id="SSF46689">
    <property type="entry name" value="Homeodomain-like"/>
    <property type="match status" value="2"/>
</dbReference>
<dbReference type="PROSITE" id="PS00041">
    <property type="entry name" value="HTH_ARAC_FAMILY_1"/>
    <property type="match status" value="1"/>
</dbReference>
<dbReference type="PROSITE" id="PS01124">
    <property type="entry name" value="HTH_ARAC_FAMILY_2"/>
    <property type="match status" value="1"/>
</dbReference>
<accession>P40883</accession>
<proteinExistence type="evidence at transcript level"/>
<evidence type="ECO:0000255" key="1">
    <source>
        <dbReference type="PROSITE-ProRule" id="PRU00593"/>
    </source>
</evidence>